<sequence length="159" mass="17967">MKPIAIYPGTFDPLTNGHVDIIERALPLFNKIIVACAPTSRKDPHLKLEERVNLIADVLTDERVEVLPLTGLLVDFAKTHQANFILRGLRAVSDFDYEFQLAHMNYQLSPEIETIFLPAREGYSYVSGTMVREIVTLGGDVSPFVPPLVARHLQKRREK</sequence>
<accession>B6J216</accession>
<gene>
    <name evidence="1" type="primary">coaD</name>
    <name type="ordered locus">CbuG_1718</name>
</gene>
<dbReference type="EC" id="2.7.7.3" evidence="1"/>
<dbReference type="EMBL" id="CP001019">
    <property type="protein sequence ID" value="ACJ18994.1"/>
    <property type="molecule type" value="Genomic_DNA"/>
</dbReference>
<dbReference type="RefSeq" id="WP_005771452.1">
    <property type="nucleotide sequence ID" value="NC_011527.1"/>
</dbReference>
<dbReference type="SMR" id="B6J216"/>
<dbReference type="KEGG" id="cbg:CbuG_1718"/>
<dbReference type="HOGENOM" id="CLU_100149_0_1_6"/>
<dbReference type="UniPathway" id="UPA00241">
    <property type="reaction ID" value="UER00355"/>
</dbReference>
<dbReference type="GO" id="GO:0005737">
    <property type="term" value="C:cytoplasm"/>
    <property type="evidence" value="ECO:0007669"/>
    <property type="project" value="UniProtKB-SubCell"/>
</dbReference>
<dbReference type="GO" id="GO:0005524">
    <property type="term" value="F:ATP binding"/>
    <property type="evidence" value="ECO:0007669"/>
    <property type="project" value="UniProtKB-KW"/>
</dbReference>
<dbReference type="GO" id="GO:0004595">
    <property type="term" value="F:pantetheine-phosphate adenylyltransferase activity"/>
    <property type="evidence" value="ECO:0007669"/>
    <property type="project" value="UniProtKB-UniRule"/>
</dbReference>
<dbReference type="GO" id="GO:0015937">
    <property type="term" value="P:coenzyme A biosynthetic process"/>
    <property type="evidence" value="ECO:0007669"/>
    <property type="project" value="UniProtKB-UniRule"/>
</dbReference>
<dbReference type="CDD" id="cd02163">
    <property type="entry name" value="PPAT"/>
    <property type="match status" value="1"/>
</dbReference>
<dbReference type="Gene3D" id="3.40.50.620">
    <property type="entry name" value="HUPs"/>
    <property type="match status" value="1"/>
</dbReference>
<dbReference type="HAMAP" id="MF_00151">
    <property type="entry name" value="PPAT_bact"/>
    <property type="match status" value="1"/>
</dbReference>
<dbReference type="InterPro" id="IPR004821">
    <property type="entry name" value="Cyt_trans-like"/>
</dbReference>
<dbReference type="InterPro" id="IPR001980">
    <property type="entry name" value="PPAT"/>
</dbReference>
<dbReference type="InterPro" id="IPR014729">
    <property type="entry name" value="Rossmann-like_a/b/a_fold"/>
</dbReference>
<dbReference type="NCBIfam" id="TIGR01510">
    <property type="entry name" value="coaD_prev_kdtB"/>
    <property type="match status" value="1"/>
</dbReference>
<dbReference type="NCBIfam" id="TIGR00125">
    <property type="entry name" value="cyt_tran_rel"/>
    <property type="match status" value="1"/>
</dbReference>
<dbReference type="PANTHER" id="PTHR21342">
    <property type="entry name" value="PHOSPHOPANTETHEINE ADENYLYLTRANSFERASE"/>
    <property type="match status" value="1"/>
</dbReference>
<dbReference type="PANTHER" id="PTHR21342:SF1">
    <property type="entry name" value="PHOSPHOPANTETHEINE ADENYLYLTRANSFERASE"/>
    <property type="match status" value="1"/>
</dbReference>
<dbReference type="Pfam" id="PF01467">
    <property type="entry name" value="CTP_transf_like"/>
    <property type="match status" value="1"/>
</dbReference>
<dbReference type="PRINTS" id="PR01020">
    <property type="entry name" value="LPSBIOSNTHSS"/>
</dbReference>
<dbReference type="SUPFAM" id="SSF52374">
    <property type="entry name" value="Nucleotidylyl transferase"/>
    <property type="match status" value="1"/>
</dbReference>
<keyword id="KW-0067">ATP-binding</keyword>
<keyword id="KW-0173">Coenzyme A biosynthesis</keyword>
<keyword id="KW-0963">Cytoplasm</keyword>
<keyword id="KW-0460">Magnesium</keyword>
<keyword id="KW-0547">Nucleotide-binding</keyword>
<keyword id="KW-0548">Nucleotidyltransferase</keyword>
<keyword id="KW-0808">Transferase</keyword>
<protein>
    <recommendedName>
        <fullName evidence="1">Phosphopantetheine adenylyltransferase</fullName>
        <ecNumber evidence="1">2.7.7.3</ecNumber>
    </recommendedName>
    <alternativeName>
        <fullName evidence="1">Dephospho-CoA pyrophosphorylase</fullName>
    </alternativeName>
    <alternativeName>
        <fullName evidence="1">Pantetheine-phosphate adenylyltransferase</fullName>
        <shortName evidence="1">PPAT</shortName>
    </alternativeName>
</protein>
<comment type="function">
    <text evidence="1">Reversibly transfers an adenylyl group from ATP to 4'-phosphopantetheine, yielding dephospho-CoA (dPCoA) and pyrophosphate.</text>
</comment>
<comment type="catalytic activity">
    <reaction evidence="1">
        <text>(R)-4'-phosphopantetheine + ATP + H(+) = 3'-dephospho-CoA + diphosphate</text>
        <dbReference type="Rhea" id="RHEA:19801"/>
        <dbReference type="ChEBI" id="CHEBI:15378"/>
        <dbReference type="ChEBI" id="CHEBI:30616"/>
        <dbReference type="ChEBI" id="CHEBI:33019"/>
        <dbReference type="ChEBI" id="CHEBI:57328"/>
        <dbReference type="ChEBI" id="CHEBI:61723"/>
        <dbReference type="EC" id="2.7.7.3"/>
    </reaction>
</comment>
<comment type="cofactor">
    <cofactor evidence="1">
        <name>Mg(2+)</name>
        <dbReference type="ChEBI" id="CHEBI:18420"/>
    </cofactor>
</comment>
<comment type="pathway">
    <text evidence="1">Cofactor biosynthesis; coenzyme A biosynthesis; CoA from (R)-pantothenate: step 4/5.</text>
</comment>
<comment type="subunit">
    <text evidence="1">Homohexamer.</text>
</comment>
<comment type="subcellular location">
    <subcellularLocation>
        <location evidence="1">Cytoplasm</location>
    </subcellularLocation>
</comment>
<comment type="similarity">
    <text evidence="1">Belongs to the bacterial CoaD family.</text>
</comment>
<proteinExistence type="inferred from homology"/>
<evidence type="ECO:0000255" key="1">
    <source>
        <dbReference type="HAMAP-Rule" id="MF_00151"/>
    </source>
</evidence>
<name>COAD_COXB2</name>
<reference key="1">
    <citation type="journal article" date="2009" name="Infect. Immun.">
        <title>Comparative genomics reveal extensive transposon-mediated genomic plasticity and diversity among potential effector proteins within the genus Coxiella.</title>
        <authorList>
            <person name="Beare P.A."/>
            <person name="Unsworth N."/>
            <person name="Andoh M."/>
            <person name="Voth D.E."/>
            <person name="Omsland A."/>
            <person name="Gilk S.D."/>
            <person name="Williams K.P."/>
            <person name="Sobral B.W."/>
            <person name="Kupko J.J. III"/>
            <person name="Porcella S.F."/>
            <person name="Samuel J.E."/>
            <person name="Heinzen R.A."/>
        </authorList>
    </citation>
    <scope>NUCLEOTIDE SEQUENCE [LARGE SCALE GENOMIC DNA]</scope>
    <source>
        <strain>CbuG_Q212</strain>
    </source>
</reference>
<feature type="chain" id="PRO_1000096784" description="Phosphopantetheine adenylyltransferase">
    <location>
        <begin position="1"/>
        <end position="159"/>
    </location>
</feature>
<feature type="binding site" evidence="1">
    <location>
        <begin position="10"/>
        <end position="11"/>
    </location>
    <ligand>
        <name>ATP</name>
        <dbReference type="ChEBI" id="CHEBI:30616"/>
    </ligand>
</feature>
<feature type="binding site" evidence="1">
    <location>
        <position position="10"/>
    </location>
    <ligand>
        <name>substrate</name>
    </ligand>
</feature>
<feature type="binding site" evidence="1">
    <location>
        <position position="18"/>
    </location>
    <ligand>
        <name>ATP</name>
        <dbReference type="ChEBI" id="CHEBI:30616"/>
    </ligand>
</feature>
<feature type="binding site" evidence="1">
    <location>
        <position position="42"/>
    </location>
    <ligand>
        <name>substrate</name>
    </ligand>
</feature>
<feature type="binding site" evidence="1">
    <location>
        <position position="73"/>
    </location>
    <ligand>
        <name>substrate</name>
    </ligand>
</feature>
<feature type="binding site" evidence="1">
    <location>
        <position position="87"/>
    </location>
    <ligand>
        <name>substrate</name>
    </ligand>
</feature>
<feature type="binding site" evidence="1">
    <location>
        <begin position="88"/>
        <end position="90"/>
    </location>
    <ligand>
        <name>ATP</name>
        <dbReference type="ChEBI" id="CHEBI:30616"/>
    </ligand>
</feature>
<feature type="binding site" evidence="1">
    <location>
        <position position="98"/>
    </location>
    <ligand>
        <name>ATP</name>
        <dbReference type="ChEBI" id="CHEBI:30616"/>
    </ligand>
</feature>
<feature type="binding site" evidence="1">
    <location>
        <begin position="123"/>
        <end position="129"/>
    </location>
    <ligand>
        <name>ATP</name>
        <dbReference type="ChEBI" id="CHEBI:30616"/>
    </ligand>
</feature>
<feature type="site" description="Transition state stabilizer" evidence="1">
    <location>
        <position position="18"/>
    </location>
</feature>
<organism>
    <name type="scientific">Coxiella burnetii (strain CbuG_Q212)</name>
    <name type="common">Coxiella burnetii (strain Q212)</name>
    <dbReference type="NCBI Taxonomy" id="434923"/>
    <lineage>
        <taxon>Bacteria</taxon>
        <taxon>Pseudomonadati</taxon>
        <taxon>Pseudomonadota</taxon>
        <taxon>Gammaproteobacteria</taxon>
        <taxon>Legionellales</taxon>
        <taxon>Coxiellaceae</taxon>
        <taxon>Coxiella</taxon>
    </lineage>
</organism>